<proteinExistence type="inferred from homology"/>
<reference key="1">
    <citation type="journal article" date="1992" name="Infect. Immun.">
        <title>Evaluation of genetic divergence among Borrelia burgdorferi isolates by use of OspA, fla, HSP60, and HSP70 gene probes.</title>
        <authorList>
            <person name="Wallich R."/>
            <person name="Helmes C."/>
            <person name="Schaible U.E."/>
            <person name="Lobet Y."/>
            <person name="Moter S.E."/>
            <person name="Kramer M.D."/>
            <person name="Simon M.M."/>
        </authorList>
    </citation>
    <scope>NUCLEOTIDE SEQUENCE [GENOMIC DNA]</scope>
    <source>
        <strain>ZQ1</strain>
    </source>
</reference>
<accession>Q04851</accession>
<comment type="subcellular location">
    <subcellularLocation>
        <location evidence="4">Cell outer membrane</location>
        <topology evidence="1">Lipid-anchor</topology>
    </subcellularLocation>
    <subcellularLocation>
        <location evidence="4">Cell surface</location>
    </subcellularLocation>
</comment>
<comment type="similarity">
    <text evidence="3">Belongs to the OspA lipoprotein family.</text>
</comment>
<dbReference type="EMBL" id="X66065">
    <property type="protein sequence ID" value="CAA46865.1"/>
    <property type="molecule type" value="Genomic_DNA"/>
</dbReference>
<dbReference type="PIR" id="B49209">
    <property type="entry name" value="B49209"/>
</dbReference>
<dbReference type="SMR" id="Q04851"/>
<dbReference type="GO" id="GO:0009279">
    <property type="term" value="C:cell outer membrane"/>
    <property type="evidence" value="ECO:0007669"/>
    <property type="project" value="UniProtKB-SubCell"/>
</dbReference>
<dbReference type="GO" id="GO:0009986">
    <property type="term" value="C:cell surface"/>
    <property type="evidence" value="ECO:0007669"/>
    <property type="project" value="UniProtKB-SubCell"/>
</dbReference>
<dbReference type="FunFam" id="2.40.128.160:FF:000001">
    <property type="entry name" value="Outer surface protein A"/>
    <property type="match status" value="1"/>
</dbReference>
<dbReference type="Gene3D" id="3.90.930.1">
    <property type="match status" value="1"/>
</dbReference>
<dbReference type="Gene3D" id="2.40.128.160">
    <property type="entry name" value="C1 set domains (antibody constant domain-like)"/>
    <property type="match status" value="1"/>
</dbReference>
<dbReference type="InterPro" id="IPR001809">
    <property type="entry name" value="OM_lipoprot_Borrelia"/>
</dbReference>
<dbReference type="InterPro" id="IPR023322">
    <property type="entry name" value="OM_lipoprot_dom_sf"/>
</dbReference>
<dbReference type="Pfam" id="PF00820">
    <property type="entry name" value="Lipoprotein_1"/>
    <property type="match status" value="1"/>
</dbReference>
<dbReference type="PRINTS" id="PR00968">
    <property type="entry name" value="OUTRSURFACE"/>
</dbReference>
<dbReference type="SUPFAM" id="SSF51087">
    <property type="entry name" value="Outer surface protein"/>
    <property type="match status" value="1"/>
</dbReference>
<dbReference type="PROSITE" id="PS51257">
    <property type="entry name" value="PROKAR_LIPOPROTEIN"/>
    <property type="match status" value="1"/>
</dbReference>
<protein>
    <recommendedName>
        <fullName evidence="2">Outer surface protein A</fullName>
    </recommendedName>
</protein>
<name>OSPA4_BORBG</name>
<evidence type="ECO:0000255" key="1">
    <source>
        <dbReference type="PROSITE-ProRule" id="PRU00303"/>
    </source>
</evidence>
<evidence type="ECO:0000303" key="2">
    <source>
    </source>
</evidence>
<evidence type="ECO:0000305" key="3"/>
<evidence type="ECO:0000305" key="4">
    <source>
    </source>
</evidence>
<gene>
    <name evidence="2" type="primary">ospA</name>
</gene>
<keyword id="KW-0998">Cell outer membrane</keyword>
<keyword id="KW-0449">Lipoprotein</keyword>
<keyword id="KW-0472">Membrane</keyword>
<keyword id="KW-0564">Palmitate</keyword>
<keyword id="KW-0614">Plasmid</keyword>
<keyword id="KW-0732">Signal</keyword>
<sequence>MKKYLLGIGLILALIACKQNVSSLDEKNSVSVDLPGGMKVLVSKEKDKDGKYSLEATVDKLELKGTSDKNNGSGTLEGEKTDKSKVKLTIAEDLSKTTFEIFKEDGKTLVSKKVTLKDKSSTEEKFNEKGEISEKTIVRANGTRLEYTDIKSDGSGKAKEVLKDFTLEGTLAADGKTTLKVTEGTVVLSKNILKSGEITVALDDSDTTQATKKTGKWDSKTSTLTISVNSQKTKNLVFTKEDTITVQKYDSAGTNLEGKAVEITTLKELKDALK</sequence>
<organism>
    <name type="scientific">Borreliella burgdorferi</name>
    <name type="common">Lyme disease spirochete</name>
    <name type="synonym">Borrelia burgdorferi</name>
    <dbReference type="NCBI Taxonomy" id="139"/>
    <lineage>
        <taxon>Bacteria</taxon>
        <taxon>Pseudomonadati</taxon>
        <taxon>Spirochaetota</taxon>
        <taxon>Spirochaetia</taxon>
        <taxon>Spirochaetales</taxon>
        <taxon>Borreliaceae</taxon>
        <taxon>Borreliella</taxon>
    </lineage>
</organism>
<geneLocation type="plasmid">
    <name>lp54</name>
</geneLocation>
<feature type="signal peptide" evidence="1">
    <location>
        <begin position="1"/>
        <end position="16"/>
    </location>
</feature>
<feature type="chain" id="PRO_0000018077" description="Outer surface protein A" evidence="1">
    <location>
        <begin position="17"/>
        <end position="274"/>
    </location>
</feature>
<feature type="lipid moiety-binding region" description="N-palmitoyl cysteine" evidence="1">
    <location>
        <position position="17"/>
    </location>
</feature>
<feature type="lipid moiety-binding region" description="S-diacylglycerol cysteine" evidence="1">
    <location>
        <position position="17"/>
    </location>
</feature>